<proteinExistence type="inferred from homology"/>
<accession>Q0HLK3</accession>
<evidence type="ECO:0000255" key="1">
    <source>
        <dbReference type="HAMAP-Rule" id="MF_00206"/>
    </source>
</evidence>
<evidence type="ECO:0000255" key="2">
    <source>
        <dbReference type="PROSITE-ProRule" id="PRU01266"/>
    </source>
</evidence>
<sequence length="321" mass="36465">MNRPERLQPGVKLRDADKVSRIPVKIVPSERETMLRKPDWLRVKLPASNQRILEIKQALRSNGLHSVCEEASCPNLAECFNHGTATFMILGAICTRRCPFCDVAHGRPLKPDAEEPVKLAQTIRDMKLKYVVITSVDRDDLRDGGAQHFADCIREIRKLNPEIKIEILVPDFRGRIDAALDILSTEPPDVFNHNLETAPMHYRKARPGANYQWSLDLLKRFKERHPNVPTKSGLMMGLGETNEEIAQVLRDLREHKVEMLTLGQYLQPSKFHLPVERYVSPAEFDELKVLADELGFTHAACGPLVRSSYHADLQAQGKEVK</sequence>
<organism>
    <name type="scientific">Shewanella sp. (strain MR-4)</name>
    <dbReference type="NCBI Taxonomy" id="60480"/>
    <lineage>
        <taxon>Bacteria</taxon>
        <taxon>Pseudomonadati</taxon>
        <taxon>Pseudomonadota</taxon>
        <taxon>Gammaproteobacteria</taxon>
        <taxon>Alteromonadales</taxon>
        <taxon>Shewanellaceae</taxon>
        <taxon>Shewanella</taxon>
    </lineage>
</organism>
<reference key="1">
    <citation type="submission" date="2006-08" db="EMBL/GenBank/DDBJ databases">
        <title>Complete sequence of Shewanella sp. MR-4.</title>
        <authorList>
            <consortium name="US DOE Joint Genome Institute"/>
            <person name="Copeland A."/>
            <person name="Lucas S."/>
            <person name="Lapidus A."/>
            <person name="Barry K."/>
            <person name="Detter J.C."/>
            <person name="Glavina del Rio T."/>
            <person name="Hammon N."/>
            <person name="Israni S."/>
            <person name="Dalin E."/>
            <person name="Tice H."/>
            <person name="Pitluck S."/>
            <person name="Kiss H."/>
            <person name="Brettin T."/>
            <person name="Bruce D."/>
            <person name="Han C."/>
            <person name="Tapia R."/>
            <person name="Gilna P."/>
            <person name="Schmutz J."/>
            <person name="Larimer F."/>
            <person name="Land M."/>
            <person name="Hauser L."/>
            <person name="Kyrpides N."/>
            <person name="Mikhailova N."/>
            <person name="Nealson K."/>
            <person name="Konstantinidis K."/>
            <person name="Klappenbach J."/>
            <person name="Tiedje J."/>
            <person name="Richardson P."/>
        </authorList>
    </citation>
    <scope>NUCLEOTIDE SEQUENCE [LARGE SCALE GENOMIC DNA]</scope>
    <source>
        <strain>MR-4</strain>
    </source>
</reference>
<keyword id="KW-0004">4Fe-4S</keyword>
<keyword id="KW-0963">Cytoplasm</keyword>
<keyword id="KW-0408">Iron</keyword>
<keyword id="KW-0411">Iron-sulfur</keyword>
<keyword id="KW-0479">Metal-binding</keyword>
<keyword id="KW-0949">S-adenosyl-L-methionine</keyword>
<keyword id="KW-0808">Transferase</keyword>
<protein>
    <recommendedName>
        <fullName evidence="1">Lipoyl synthase</fullName>
        <ecNumber evidence="1">2.8.1.8</ecNumber>
    </recommendedName>
    <alternativeName>
        <fullName evidence="1">Lip-syn</fullName>
        <shortName evidence="1">LS</shortName>
    </alternativeName>
    <alternativeName>
        <fullName evidence="1">Lipoate synthase</fullName>
    </alternativeName>
    <alternativeName>
        <fullName evidence="1">Lipoic acid synthase</fullName>
    </alternativeName>
    <alternativeName>
        <fullName evidence="1">Sulfur insertion protein LipA</fullName>
    </alternativeName>
</protein>
<feature type="chain" id="PRO_1000012279" description="Lipoyl synthase">
    <location>
        <begin position="1"/>
        <end position="321"/>
    </location>
</feature>
<feature type="domain" description="Radical SAM core" evidence="2">
    <location>
        <begin position="80"/>
        <end position="297"/>
    </location>
</feature>
<feature type="binding site" evidence="1">
    <location>
        <position position="68"/>
    </location>
    <ligand>
        <name>[4Fe-4S] cluster</name>
        <dbReference type="ChEBI" id="CHEBI:49883"/>
        <label>1</label>
    </ligand>
</feature>
<feature type="binding site" evidence="1">
    <location>
        <position position="73"/>
    </location>
    <ligand>
        <name>[4Fe-4S] cluster</name>
        <dbReference type="ChEBI" id="CHEBI:49883"/>
        <label>1</label>
    </ligand>
</feature>
<feature type="binding site" evidence="1">
    <location>
        <position position="79"/>
    </location>
    <ligand>
        <name>[4Fe-4S] cluster</name>
        <dbReference type="ChEBI" id="CHEBI:49883"/>
        <label>1</label>
    </ligand>
</feature>
<feature type="binding site" evidence="1">
    <location>
        <position position="94"/>
    </location>
    <ligand>
        <name>[4Fe-4S] cluster</name>
        <dbReference type="ChEBI" id="CHEBI:49883"/>
        <label>2</label>
        <note>4Fe-4S-S-AdoMet</note>
    </ligand>
</feature>
<feature type="binding site" evidence="1">
    <location>
        <position position="98"/>
    </location>
    <ligand>
        <name>[4Fe-4S] cluster</name>
        <dbReference type="ChEBI" id="CHEBI:49883"/>
        <label>2</label>
        <note>4Fe-4S-S-AdoMet</note>
    </ligand>
</feature>
<feature type="binding site" evidence="1">
    <location>
        <position position="101"/>
    </location>
    <ligand>
        <name>[4Fe-4S] cluster</name>
        <dbReference type="ChEBI" id="CHEBI:49883"/>
        <label>2</label>
        <note>4Fe-4S-S-AdoMet</note>
    </ligand>
</feature>
<feature type="binding site" evidence="1">
    <location>
        <position position="308"/>
    </location>
    <ligand>
        <name>[4Fe-4S] cluster</name>
        <dbReference type="ChEBI" id="CHEBI:49883"/>
        <label>1</label>
    </ligand>
</feature>
<name>LIPA_SHESM</name>
<gene>
    <name evidence="1" type="primary">lipA</name>
    <name type="ordered locus">Shewmr4_0984</name>
</gene>
<dbReference type="EC" id="2.8.1.8" evidence="1"/>
<dbReference type="EMBL" id="CP000446">
    <property type="protein sequence ID" value="ABI38064.1"/>
    <property type="molecule type" value="Genomic_DNA"/>
</dbReference>
<dbReference type="RefSeq" id="WP_011621776.1">
    <property type="nucleotide sequence ID" value="NC_008321.1"/>
</dbReference>
<dbReference type="SMR" id="Q0HLK3"/>
<dbReference type="KEGG" id="she:Shewmr4_0984"/>
<dbReference type="HOGENOM" id="CLU_033144_2_1_6"/>
<dbReference type="UniPathway" id="UPA00538">
    <property type="reaction ID" value="UER00593"/>
</dbReference>
<dbReference type="GO" id="GO:0005737">
    <property type="term" value="C:cytoplasm"/>
    <property type="evidence" value="ECO:0007669"/>
    <property type="project" value="UniProtKB-SubCell"/>
</dbReference>
<dbReference type="GO" id="GO:0051539">
    <property type="term" value="F:4 iron, 4 sulfur cluster binding"/>
    <property type="evidence" value="ECO:0007669"/>
    <property type="project" value="UniProtKB-UniRule"/>
</dbReference>
<dbReference type="GO" id="GO:0016992">
    <property type="term" value="F:lipoate synthase activity"/>
    <property type="evidence" value="ECO:0007669"/>
    <property type="project" value="UniProtKB-UniRule"/>
</dbReference>
<dbReference type="GO" id="GO:0046872">
    <property type="term" value="F:metal ion binding"/>
    <property type="evidence" value="ECO:0007669"/>
    <property type="project" value="UniProtKB-KW"/>
</dbReference>
<dbReference type="CDD" id="cd01335">
    <property type="entry name" value="Radical_SAM"/>
    <property type="match status" value="1"/>
</dbReference>
<dbReference type="FunFam" id="3.20.20.70:FF:000023">
    <property type="entry name" value="Lipoyl synthase"/>
    <property type="match status" value="1"/>
</dbReference>
<dbReference type="Gene3D" id="3.20.20.70">
    <property type="entry name" value="Aldolase class I"/>
    <property type="match status" value="1"/>
</dbReference>
<dbReference type="HAMAP" id="MF_00206">
    <property type="entry name" value="Lipoyl_synth"/>
    <property type="match status" value="1"/>
</dbReference>
<dbReference type="InterPro" id="IPR013785">
    <property type="entry name" value="Aldolase_TIM"/>
</dbReference>
<dbReference type="InterPro" id="IPR006638">
    <property type="entry name" value="Elp3/MiaA/NifB-like_rSAM"/>
</dbReference>
<dbReference type="InterPro" id="IPR003698">
    <property type="entry name" value="Lipoyl_synth"/>
</dbReference>
<dbReference type="InterPro" id="IPR007197">
    <property type="entry name" value="rSAM"/>
</dbReference>
<dbReference type="NCBIfam" id="TIGR00510">
    <property type="entry name" value="lipA"/>
    <property type="match status" value="1"/>
</dbReference>
<dbReference type="NCBIfam" id="NF004019">
    <property type="entry name" value="PRK05481.1"/>
    <property type="match status" value="1"/>
</dbReference>
<dbReference type="NCBIfam" id="NF009544">
    <property type="entry name" value="PRK12928.1"/>
    <property type="match status" value="1"/>
</dbReference>
<dbReference type="PANTHER" id="PTHR10949">
    <property type="entry name" value="LIPOYL SYNTHASE"/>
    <property type="match status" value="1"/>
</dbReference>
<dbReference type="PANTHER" id="PTHR10949:SF0">
    <property type="entry name" value="LIPOYL SYNTHASE, MITOCHONDRIAL"/>
    <property type="match status" value="1"/>
</dbReference>
<dbReference type="Pfam" id="PF04055">
    <property type="entry name" value="Radical_SAM"/>
    <property type="match status" value="1"/>
</dbReference>
<dbReference type="PIRSF" id="PIRSF005963">
    <property type="entry name" value="Lipoyl_synth"/>
    <property type="match status" value="1"/>
</dbReference>
<dbReference type="SFLD" id="SFLDF00271">
    <property type="entry name" value="lipoyl_synthase"/>
    <property type="match status" value="1"/>
</dbReference>
<dbReference type="SFLD" id="SFLDS00029">
    <property type="entry name" value="Radical_SAM"/>
    <property type="match status" value="1"/>
</dbReference>
<dbReference type="SMART" id="SM00729">
    <property type="entry name" value="Elp3"/>
    <property type="match status" value="1"/>
</dbReference>
<dbReference type="SUPFAM" id="SSF102114">
    <property type="entry name" value="Radical SAM enzymes"/>
    <property type="match status" value="1"/>
</dbReference>
<dbReference type="PROSITE" id="PS51918">
    <property type="entry name" value="RADICAL_SAM"/>
    <property type="match status" value="1"/>
</dbReference>
<comment type="function">
    <text evidence="1">Catalyzes the radical-mediated insertion of two sulfur atoms into the C-6 and C-8 positions of the octanoyl moiety bound to the lipoyl domains of lipoate-dependent enzymes, thereby converting the octanoylated domains into lipoylated derivatives.</text>
</comment>
<comment type="catalytic activity">
    <reaction evidence="1">
        <text>[[Fe-S] cluster scaffold protein carrying a second [4Fe-4S](2+) cluster] + N(6)-octanoyl-L-lysyl-[protein] + 2 oxidized [2Fe-2S]-[ferredoxin] + 2 S-adenosyl-L-methionine + 4 H(+) = [[Fe-S] cluster scaffold protein] + N(6)-[(R)-dihydrolipoyl]-L-lysyl-[protein] + 4 Fe(3+) + 2 hydrogen sulfide + 2 5'-deoxyadenosine + 2 L-methionine + 2 reduced [2Fe-2S]-[ferredoxin]</text>
        <dbReference type="Rhea" id="RHEA:16585"/>
        <dbReference type="Rhea" id="RHEA-COMP:9928"/>
        <dbReference type="Rhea" id="RHEA-COMP:10000"/>
        <dbReference type="Rhea" id="RHEA-COMP:10001"/>
        <dbReference type="Rhea" id="RHEA-COMP:10475"/>
        <dbReference type="Rhea" id="RHEA-COMP:14568"/>
        <dbReference type="Rhea" id="RHEA-COMP:14569"/>
        <dbReference type="ChEBI" id="CHEBI:15378"/>
        <dbReference type="ChEBI" id="CHEBI:17319"/>
        <dbReference type="ChEBI" id="CHEBI:29034"/>
        <dbReference type="ChEBI" id="CHEBI:29919"/>
        <dbReference type="ChEBI" id="CHEBI:33722"/>
        <dbReference type="ChEBI" id="CHEBI:33737"/>
        <dbReference type="ChEBI" id="CHEBI:33738"/>
        <dbReference type="ChEBI" id="CHEBI:57844"/>
        <dbReference type="ChEBI" id="CHEBI:59789"/>
        <dbReference type="ChEBI" id="CHEBI:78809"/>
        <dbReference type="ChEBI" id="CHEBI:83100"/>
        <dbReference type="EC" id="2.8.1.8"/>
    </reaction>
</comment>
<comment type="cofactor">
    <cofactor evidence="1">
        <name>[4Fe-4S] cluster</name>
        <dbReference type="ChEBI" id="CHEBI:49883"/>
    </cofactor>
    <text evidence="1">Binds 2 [4Fe-4S] clusters per subunit. One cluster is coordinated with 3 cysteines and an exchangeable S-adenosyl-L-methionine.</text>
</comment>
<comment type="pathway">
    <text evidence="1">Protein modification; protein lipoylation via endogenous pathway; protein N(6)-(lipoyl)lysine from octanoyl-[acyl-carrier-protein]: step 2/2.</text>
</comment>
<comment type="subcellular location">
    <subcellularLocation>
        <location evidence="1">Cytoplasm</location>
    </subcellularLocation>
</comment>
<comment type="similarity">
    <text evidence="1">Belongs to the radical SAM superfamily. Lipoyl synthase family.</text>
</comment>